<proteinExistence type="inferred from homology"/>
<comment type="function">
    <text evidence="1">Involved in protein export. Acts as a chaperone by maintaining the newly synthesized protein in an open conformation. Functions as a peptidyl-prolyl cis-trans isomerase.</text>
</comment>
<comment type="catalytic activity">
    <reaction evidence="1">
        <text>[protein]-peptidylproline (omega=180) = [protein]-peptidylproline (omega=0)</text>
        <dbReference type="Rhea" id="RHEA:16237"/>
        <dbReference type="Rhea" id="RHEA-COMP:10747"/>
        <dbReference type="Rhea" id="RHEA-COMP:10748"/>
        <dbReference type="ChEBI" id="CHEBI:83833"/>
        <dbReference type="ChEBI" id="CHEBI:83834"/>
        <dbReference type="EC" id="5.2.1.8"/>
    </reaction>
</comment>
<comment type="subcellular location">
    <subcellularLocation>
        <location>Cytoplasm</location>
    </subcellularLocation>
    <text evidence="1">About half TF is bound to the ribosome near the polypeptide exit tunnel while the other half is free in the cytoplasm.</text>
</comment>
<comment type="domain">
    <text evidence="1">Consists of 3 domains; the N-terminus binds the ribosome, the middle domain has PPIase activity, while the C-terminus has intrinsic chaperone activity on its own.</text>
</comment>
<comment type="similarity">
    <text evidence="1">Belongs to the FKBP-type PPIase family. Tig subfamily.</text>
</comment>
<sequence length="427" mass="47282">MSVSFENKETNRGVLTFTISQDQIKPELDRVFKSVKKSLNVPGFRKGHLPRPIFDKKFGEESLYQDVMNALLPNAYEAAVKEAGLEVVAQPKIDVTSMEKGQDWVIAAEVVTKPEVKLGDYKNLEVSVDVEKEVTDADVEERIERERNNLAELVIKEAAAENGDTVVIDFVGSIDGVEFDGGKGENFSLGLGSGQFIPGFEDQLVGHSAGETVDVIVTFPEDYQAEDLAGKEAKFVTTIHEVKAKEVPALDDELAKDIDEEVETLADLKEKYRKELAAAKEEAYKDAVEGAAIDTAVENAEIVELPEEMIHEEVHRSVNEFLGNLQRQGINPDMYFQITGTTQEDLHNQYQAEAESRTKTNLVIEAVAKAEGFDASEEEIQKEVEQLAADYNMEVAQVQNLLSADMLKHDITIKKAVELITSTATVK</sequence>
<protein>
    <recommendedName>
        <fullName evidence="1">Trigger factor</fullName>
        <shortName evidence="1">TF</shortName>
        <ecNumber evidence="1">5.2.1.8</ecNumber>
    </recommendedName>
    <alternativeName>
        <fullName evidence="1">PPIase</fullName>
    </alternativeName>
</protein>
<gene>
    <name evidence="1" type="primary">tig</name>
    <name type="ordered locus">SPP_0432</name>
</gene>
<reference key="1">
    <citation type="journal article" date="2010" name="Genome Biol.">
        <title>Structure and dynamics of the pan-genome of Streptococcus pneumoniae and closely related species.</title>
        <authorList>
            <person name="Donati C."/>
            <person name="Hiller N.L."/>
            <person name="Tettelin H."/>
            <person name="Muzzi A."/>
            <person name="Croucher N.J."/>
            <person name="Angiuoli S.V."/>
            <person name="Oggioni M."/>
            <person name="Dunning Hotopp J.C."/>
            <person name="Hu F.Z."/>
            <person name="Riley D.R."/>
            <person name="Covacci A."/>
            <person name="Mitchell T.J."/>
            <person name="Bentley S.D."/>
            <person name="Kilian M."/>
            <person name="Ehrlich G.D."/>
            <person name="Rappuoli R."/>
            <person name="Moxon E.R."/>
            <person name="Masignani V."/>
        </authorList>
    </citation>
    <scope>NUCLEOTIDE SEQUENCE [LARGE SCALE GENOMIC DNA]</scope>
    <source>
        <strain>P1031</strain>
    </source>
</reference>
<keyword id="KW-0131">Cell cycle</keyword>
<keyword id="KW-0132">Cell division</keyword>
<keyword id="KW-0143">Chaperone</keyword>
<keyword id="KW-0963">Cytoplasm</keyword>
<keyword id="KW-0413">Isomerase</keyword>
<keyword id="KW-0697">Rotamase</keyword>
<dbReference type="EC" id="5.2.1.8" evidence="1"/>
<dbReference type="EMBL" id="CP000920">
    <property type="protein sequence ID" value="ACO20618.1"/>
    <property type="molecule type" value="Genomic_DNA"/>
</dbReference>
<dbReference type="RefSeq" id="WP_000116465.1">
    <property type="nucleotide sequence ID" value="NC_012467.1"/>
</dbReference>
<dbReference type="SMR" id="C1CIQ2"/>
<dbReference type="KEGG" id="spp:SPP_0432"/>
<dbReference type="HOGENOM" id="CLU_033058_3_2_9"/>
<dbReference type="GO" id="GO:0005737">
    <property type="term" value="C:cytoplasm"/>
    <property type="evidence" value="ECO:0007669"/>
    <property type="project" value="UniProtKB-SubCell"/>
</dbReference>
<dbReference type="GO" id="GO:0003755">
    <property type="term" value="F:peptidyl-prolyl cis-trans isomerase activity"/>
    <property type="evidence" value="ECO:0007669"/>
    <property type="project" value="UniProtKB-UniRule"/>
</dbReference>
<dbReference type="GO" id="GO:0044183">
    <property type="term" value="F:protein folding chaperone"/>
    <property type="evidence" value="ECO:0007669"/>
    <property type="project" value="TreeGrafter"/>
</dbReference>
<dbReference type="GO" id="GO:0043022">
    <property type="term" value="F:ribosome binding"/>
    <property type="evidence" value="ECO:0007669"/>
    <property type="project" value="TreeGrafter"/>
</dbReference>
<dbReference type="GO" id="GO:0051083">
    <property type="term" value="P:'de novo' cotranslational protein folding"/>
    <property type="evidence" value="ECO:0007669"/>
    <property type="project" value="TreeGrafter"/>
</dbReference>
<dbReference type="GO" id="GO:0051301">
    <property type="term" value="P:cell division"/>
    <property type="evidence" value="ECO:0007669"/>
    <property type="project" value="UniProtKB-KW"/>
</dbReference>
<dbReference type="GO" id="GO:0061077">
    <property type="term" value="P:chaperone-mediated protein folding"/>
    <property type="evidence" value="ECO:0007669"/>
    <property type="project" value="TreeGrafter"/>
</dbReference>
<dbReference type="GO" id="GO:0015031">
    <property type="term" value="P:protein transport"/>
    <property type="evidence" value="ECO:0007669"/>
    <property type="project" value="UniProtKB-UniRule"/>
</dbReference>
<dbReference type="GO" id="GO:0043335">
    <property type="term" value="P:protein unfolding"/>
    <property type="evidence" value="ECO:0007669"/>
    <property type="project" value="TreeGrafter"/>
</dbReference>
<dbReference type="FunFam" id="3.10.50.40:FF:000001">
    <property type="entry name" value="Trigger factor"/>
    <property type="match status" value="1"/>
</dbReference>
<dbReference type="Gene3D" id="3.10.50.40">
    <property type="match status" value="1"/>
</dbReference>
<dbReference type="Gene3D" id="3.30.70.1050">
    <property type="entry name" value="Trigger factor ribosome-binding domain"/>
    <property type="match status" value="1"/>
</dbReference>
<dbReference type="Gene3D" id="1.10.3120.10">
    <property type="entry name" value="Trigger factor, C-terminal domain"/>
    <property type="match status" value="1"/>
</dbReference>
<dbReference type="HAMAP" id="MF_00303">
    <property type="entry name" value="Trigger_factor_Tig"/>
    <property type="match status" value="1"/>
</dbReference>
<dbReference type="InterPro" id="IPR046357">
    <property type="entry name" value="PPIase_dom_sf"/>
</dbReference>
<dbReference type="InterPro" id="IPR001179">
    <property type="entry name" value="PPIase_FKBP_dom"/>
</dbReference>
<dbReference type="InterPro" id="IPR005215">
    <property type="entry name" value="Trig_fac"/>
</dbReference>
<dbReference type="InterPro" id="IPR008880">
    <property type="entry name" value="Trigger_fac_C"/>
</dbReference>
<dbReference type="InterPro" id="IPR037041">
    <property type="entry name" value="Trigger_fac_C_sf"/>
</dbReference>
<dbReference type="InterPro" id="IPR008881">
    <property type="entry name" value="Trigger_fac_ribosome-bd_bac"/>
</dbReference>
<dbReference type="InterPro" id="IPR036611">
    <property type="entry name" value="Trigger_fac_ribosome-bd_sf"/>
</dbReference>
<dbReference type="InterPro" id="IPR027304">
    <property type="entry name" value="Trigger_fact/SurA_dom_sf"/>
</dbReference>
<dbReference type="NCBIfam" id="TIGR00115">
    <property type="entry name" value="tig"/>
    <property type="match status" value="1"/>
</dbReference>
<dbReference type="PANTHER" id="PTHR30560">
    <property type="entry name" value="TRIGGER FACTOR CHAPERONE AND PEPTIDYL-PROLYL CIS/TRANS ISOMERASE"/>
    <property type="match status" value="1"/>
</dbReference>
<dbReference type="PANTHER" id="PTHR30560:SF3">
    <property type="entry name" value="TRIGGER FACTOR-LIKE PROTEIN TIG, CHLOROPLASTIC"/>
    <property type="match status" value="1"/>
</dbReference>
<dbReference type="Pfam" id="PF00254">
    <property type="entry name" value="FKBP_C"/>
    <property type="match status" value="1"/>
</dbReference>
<dbReference type="Pfam" id="PF05698">
    <property type="entry name" value="Trigger_C"/>
    <property type="match status" value="1"/>
</dbReference>
<dbReference type="Pfam" id="PF05697">
    <property type="entry name" value="Trigger_N"/>
    <property type="match status" value="1"/>
</dbReference>
<dbReference type="PIRSF" id="PIRSF003095">
    <property type="entry name" value="Trigger_factor"/>
    <property type="match status" value="1"/>
</dbReference>
<dbReference type="SUPFAM" id="SSF54534">
    <property type="entry name" value="FKBP-like"/>
    <property type="match status" value="1"/>
</dbReference>
<dbReference type="SUPFAM" id="SSF109998">
    <property type="entry name" value="Triger factor/SurA peptide-binding domain-like"/>
    <property type="match status" value="1"/>
</dbReference>
<dbReference type="SUPFAM" id="SSF102735">
    <property type="entry name" value="Trigger factor ribosome-binding domain"/>
    <property type="match status" value="1"/>
</dbReference>
<dbReference type="PROSITE" id="PS50059">
    <property type="entry name" value="FKBP_PPIASE"/>
    <property type="match status" value="1"/>
</dbReference>
<evidence type="ECO:0000255" key="1">
    <source>
        <dbReference type="HAMAP-Rule" id="MF_00303"/>
    </source>
</evidence>
<feature type="chain" id="PRO_1000198181" description="Trigger factor">
    <location>
        <begin position="1"/>
        <end position="427"/>
    </location>
</feature>
<feature type="domain" description="PPIase FKBP-type" evidence="1">
    <location>
        <begin position="163"/>
        <end position="248"/>
    </location>
</feature>
<accession>C1CIQ2</accession>
<organism>
    <name type="scientific">Streptococcus pneumoniae (strain P1031)</name>
    <dbReference type="NCBI Taxonomy" id="488223"/>
    <lineage>
        <taxon>Bacteria</taxon>
        <taxon>Bacillati</taxon>
        <taxon>Bacillota</taxon>
        <taxon>Bacilli</taxon>
        <taxon>Lactobacillales</taxon>
        <taxon>Streptococcaceae</taxon>
        <taxon>Streptococcus</taxon>
    </lineage>
</organism>
<name>TIG_STRZP</name>